<accession>Q57847</accession>
<gene>
    <name type="ordered locus">MJ0404</name>
</gene>
<keyword id="KW-1185">Reference proteome</keyword>
<protein>
    <recommendedName>
        <fullName>Uncharacterized protein MJ0404</fullName>
    </recommendedName>
</protein>
<feature type="chain" id="PRO_0000106855" description="Uncharacterized protein MJ0404">
    <location>
        <begin position="1"/>
        <end position="150"/>
    </location>
</feature>
<name>Y404_METJA</name>
<reference key="1">
    <citation type="journal article" date="1996" name="Science">
        <title>Complete genome sequence of the methanogenic archaeon, Methanococcus jannaschii.</title>
        <authorList>
            <person name="Bult C.J."/>
            <person name="White O."/>
            <person name="Olsen G.J."/>
            <person name="Zhou L."/>
            <person name="Fleischmann R.D."/>
            <person name="Sutton G.G."/>
            <person name="Blake J.A."/>
            <person name="FitzGerald L.M."/>
            <person name="Clayton R.A."/>
            <person name="Gocayne J.D."/>
            <person name="Kerlavage A.R."/>
            <person name="Dougherty B.A."/>
            <person name="Tomb J.-F."/>
            <person name="Adams M.D."/>
            <person name="Reich C.I."/>
            <person name="Overbeek R."/>
            <person name="Kirkness E.F."/>
            <person name="Weinstock K.G."/>
            <person name="Merrick J.M."/>
            <person name="Glodek A."/>
            <person name="Scott J.L."/>
            <person name="Geoghagen N.S.M."/>
            <person name="Weidman J.F."/>
            <person name="Fuhrmann J.L."/>
            <person name="Nguyen D."/>
            <person name="Utterback T.R."/>
            <person name="Kelley J.M."/>
            <person name="Peterson J.D."/>
            <person name="Sadow P.W."/>
            <person name="Hanna M.C."/>
            <person name="Cotton M.D."/>
            <person name="Roberts K.M."/>
            <person name="Hurst M.A."/>
            <person name="Kaine B.P."/>
            <person name="Borodovsky M."/>
            <person name="Klenk H.-P."/>
            <person name="Fraser C.M."/>
            <person name="Smith H.O."/>
            <person name="Woese C.R."/>
            <person name="Venter J.C."/>
        </authorList>
    </citation>
    <scope>NUCLEOTIDE SEQUENCE [LARGE SCALE GENOMIC DNA]</scope>
    <source>
        <strain>ATCC 43067 / DSM 2661 / JAL-1 / JCM 10045 / NBRC 100440</strain>
    </source>
</reference>
<organism>
    <name type="scientific">Methanocaldococcus jannaschii (strain ATCC 43067 / DSM 2661 / JAL-1 / JCM 10045 / NBRC 100440)</name>
    <name type="common">Methanococcus jannaschii</name>
    <dbReference type="NCBI Taxonomy" id="243232"/>
    <lineage>
        <taxon>Archaea</taxon>
        <taxon>Methanobacteriati</taxon>
        <taxon>Methanobacteriota</taxon>
        <taxon>Methanomada group</taxon>
        <taxon>Methanococci</taxon>
        <taxon>Methanococcales</taxon>
        <taxon>Methanocaldococcaceae</taxon>
        <taxon>Methanocaldococcus</taxon>
    </lineage>
</organism>
<proteinExistence type="predicted"/>
<sequence length="150" mass="16867">MKKIFIYPPNSLILTDLVERFGHKPLNLNIVIGKLVRNPEIDSPPMNITDEEPKKGLKYAAVEVPSGVRGRMALIGPLIEEAEAAIIMDDAPIAFGCIGCQRTNELTLYLVRRKNIPILRVKYPTNEEEAEILVNKIANFLKSLEENQEN</sequence>
<dbReference type="EMBL" id="L77117">
    <property type="protein sequence ID" value="AAB98391.1"/>
    <property type="molecule type" value="Genomic_DNA"/>
</dbReference>
<dbReference type="PIR" id="D64350">
    <property type="entry name" value="D64350"/>
</dbReference>
<dbReference type="RefSeq" id="WP_010869903.1">
    <property type="nucleotide sequence ID" value="NC_000909.1"/>
</dbReference>
<dbReference type="SMR" id="Q57847"/>
<dbReference type="FunCoup" id="Q57847">
    <property type="interactions" value="11"/>
</dbReference>
<dbReference type="STRING" id="243232.MJ_0404"/>
<dbReference type="PaxDb" id="243232-MJ_0404"/>
<dbReference type="EnsemblBacteria" id="AAB98391">
    <property type="protein sequence ID" value="AAB98391"/>
    <property type="gene ID" value="MJ_0404"/>
</dbReference>
<dbReference type="GeneID" id="1451264"/>
<dbReference type="KEGG" id="mja:MJ_0404"/>
<dbReference type="eggNOG" id="arCOG04903">
    <property type="taxonomic scope" value="Archaea"/>
</dbReference>
<dbReference type="HOGENOM" id="CLU_1567127_0_0_2"/>
<dbReference type="InParanoid" id="Q57847"/>
<dbReference type="OrthoDB" id="52584at2157"/>
<dbReference type="PhylomeDB" id="Q57847"/>
<dbReference type="Proteomes" id="UP000000805">
    <property type="component" value="Chromosome"/>
</dbReference>
<dbReference type="InterPro" id="IPR012356">
    <property type="entry name" value="Methan_mark_5"/>
</dbReference>
<dbReference type="NCBIfam" id="TIGR03271">
    <property type="entry name" value="methan_mark_5"/>
    <property type="match status" value="1"/>
</dbReference>
<dbReference type="Pfam" id="PF09885">
    <property type="entry name" value="DUF2112"/>
    <property type="match status" value="1"/>
</dbReference>
<dbReference type="PIRSF" id="PIRSF018781">
    <property type="entry name" value="UCP018781"/>
    <property type="match status" value="1"/>
</dbReference>